<protein>
    <recommendedName>
        <fullName evidence="1">Uridylate kinase</fullName>
        <shortName evidence="1">UK</shortName>
        <ecNumber evidence="1">2.7.4.22</ecNumber>
    </recommendedName>
    <alternativeName>
        <fullName evidence="1">Uridine monophosphate kinase</fullName>
        <shortName evidence="1">UMP kinase</shortName>
        <shortName evidence="1">UMPK</shortName>
    </alternativeName>
</protein>
<dbReference type="EC" id="2.7.4.22" evidence="1"/>
<dbReference type="EMBL" id="BA000021">
    <property type="protein sequence ID" value="BAC24536.1"/>
    <property type="molecule type" value="Genomic_DNA"/>
</dbReference>
<dbReference type="SMR" id="Q8D2G4"/>
<dbReference type="STRING" id="36870.gene:10368890"/>
<dbReference type="KEGG" id="wbr:pyrH"/>
<dbReference type="eggNOG" id="COG0528">
    <property type="taxonomic scope" value="Bacteria"/>
</dbReference>
<dbReference type="HOGENOM" id="CLU_033861_2_0_6"/>
<dbReference type="UniPathway" id="UPA00159">
    <property type="reaction ID" value="UER00275"/>
</dbReference>
<dbReference type="Proteomes" id="UP000000562">
    <property type="component" value="Chromosome"/>
</dbReference>
<dbReference type="GO" id="GO:0005829">
    <property type="term" value="C:cytosol"/>
    <property type="evidence" value="ECO:0007669"/>
    <property type="project" value="TreeGrafter"/>
</dbReference>
<dbReference type="GO" id="GO:0005524">
    <property type="term" value="F:ATP binding"/>
    <property type="evidence" value="ECO:0007669"/>
    <property type="project" value="UniProtKB-KW"/>
</dbReference>
<dbReference type="GO" id="GO:0033862">
    <property type="term" value="F:UMP kinase activity"/>
    <property type="evidence" value="ECO:0007669"/>
    <property type="project" value="UniProtKB-EC"/>
</dbReference>
<dbReference type="GO" id="GO:0044210">
    <property type="term" value="P:'de novo' CTP biosynthetic process"/>
    <property type="evidence" value="ECO:0007669"/>
    <property type="project" value="UniProtKB-UniRule"/>
</dbReference>
<dbReference type="GO" id="GO:0006225">
    <property type="term" value="P:UDP biosynthetic process"/>
    <property type="evidence" value="ECO:0007669"/>
    <property type="project" value="TreeGrafter"/>
</dbReference>
<dbReference type="CDD" id="cd04254">
    <property type="entry name" value="AAK_UMPK-PyrH-Ec"/>
    <property type="match status" value="1"/>
</dbReference>
<dbReference type="FunFam" id="3.40.1160.10:FF:000001">
    <property type="entry name" value="Uridylate kinase"/>
    <property type="match status" value="1"/>
</dbReference>
<dbReference type="Gene3D" id="3.40.1160.10">
    <property type="entry name" value="Acetylglutamate kinase-like"/>
    <property type="match status" value="1"/>
</dbReference>
<dbReference type="HAMAP" id="MF_01220_B">
    <property type="entry name" value="PyrH_B"/>
    <property type="match status" value="1"/>
</dbReference>
<dbReference type="InterPro" id="IPR036393">
    <property type="entry name" value="AceGlu_kinase-like_sf"/>
</dbReference>
<dbReference type="InterPro" id="IPR001048">
    <property type="entry name" value="Asp/Glu/Uridylate_kinase"/>
</dbReference>
<dbReference type="InterPro" id="IPR011817">
    <property type="entry name" value="Uridylate_kinase"/>
</dbReference>
<dbReference type="InterPro" id="IPR015963">
    <property type="entry name" value="Uridylate_kinase_bac"/>
</dbReference>
<dbReference type="NCBIfam" id="TIGR02075">
    <property type="entry name" value="pyrH_bact"/>
    <property type="match status" value="1"/>
</dbReference>
<dbReference type="PANTHER" id="PTHR42833">
    <property type="entry name" value="URIDYLATE KINASE"/>
    <property type="match status" value="1"/>
</dbReference>
<dbReference type="PANTHER" id="PTHR42833:SF4">
    <property type="entry name" value="URIDYLATE KINASE PUMPKIN, CHLOROPLASTIC"/>
    <property type="match status" value="1"/>
</dbReference>
<dbReference type="Pfam" id="PF00696">
    <property type="entry name" value="AA_kinase"/>
    <property type="match status" value="1"/>
</dbReference>
<dbReference type="PIRSF" id="PIRSF005650">
    <property type="entry name" value="Uridylate_kin"/>
    <property type="match status" value="1"/>
</dbReference>
<dbReference type="SUPFAM" id="SSF53633">
    <property type="entry name" value="Carbamate kinase-like"/>
    <property type="match status" value="1"/>
</dbReference>
<keyword id="KW-0067">ATP-binding</keyword>
<keyword id="KW-0963">Cytoplasm</keyword>
<keyword id="KW-0418">Kinase</keyword>
<keyword id="KW-0547">Nucleotide-binding</keyword>
<keyword id="KW-0665">Pyrimidine biosynthesis</keyword>
<keyword id="KW-1185">Reference proteome</keyword>
<keyword id="KW-0808">Transferase</keyword>
<gene>
    <name evidence="1" type="primary">pyrH</name>
    <name type="ordered locus">WIGBR3900</name>
</gene>
<proteinExistence type="inferred from homology"/>
<name>PYRH_WIGBR</name>
<sequence length="241" mass="27189">MKNNKIYINKKILLKLSGECLKKGKKNLVDFDILNKITNEIKNLFNLGIQIGIVIGGGNLFRGSQLKIHGIKRNIGDHIGMMSTLINGLFIYNHFERLNIKSQLISPFPFNINGICESYNIFRINKILKKKIVIFCFGIGHTLFTTDSAACLKAIEIDANLLLKITNVDGVFSEDPAKNPNATLYKKISYDYALKKNLKIMDFTAFAIAKEHKLPIRIFNIKEPNSLYKAIIGKDIGTLIN</sequence>
<organism>
    <name type="scientific">Wigglesworthia glossinidia brevipalpis</name>
    <dbReference type="NCBI Taxonomy" id="36870"/>
    <lineage>
        <taxon>Bacteria</taxon>
        <taxon>Pseudomonadati</taxon>
        <taxon>Pseudomonadota</taxon>
        <taxon>Gammaproteobacteria</taxon>
        <taxon>Enterobacterales</taxon>
        <taxon>Erwiniaceae</taxon>
        <taxon>Wigglesworthia</taxon>
    </lineage>
</organism>
<evidence type="ECO:0000255" key="1">
    <source>
        <dbReference type="HAMAP-Rule" id="MF_01220"/>
    </source>
</evidence>
<comment type="function">
    <text evidence="1">Catalyzes the reversible phosphorylation of UMP to UDP.</text>
</comment>
<comment type="catalytic activity">
    <reaction evidence="1">
        <text>UMP + ATP = UDP + ADP</text>
        <dbReference type="Rhea" id="RHEA:24400"/>
        <dbReference type="ChEBI" id="CHEBI:30616"/>
        <dbReference type="ChEBI" id="CHEBI:57865"/>
        <dbReference type="ChEBI" id="CHEBI:58223"/>
        <dbReference type="ChEBI" id="CHEBI:456216"/>
        <dbReference type="EC" id="2.7.4.22"/>
    </reaction>
</comment>
<comment type="activity regulation">
    <text evidence="1">Inhibited by UTP.</text>
</comment>
<comment type="pathway">
    <text evidence="1">Pyrimidine metabolism; CTP biosynthesis via de novo pathway; UDP from UMP (UMPK route): step 1/1.</text>
</comment>
<comment type="subunit">
    <text evidence="1">Homohexamer.</text>
</comment>
<comment type="subcellular location">
    <subcellularLocation>
        <location evidence="1">Cytoplasm</location>
    </subcellularLocation>
</comment>
<comment type="similarity">
    <text evidence="1">Belongs to the UMP kinase family.</text>
</comment>
<feature type="chain" id="PRO_0000323982" description="Uridylate kinase">
    <location>
        <begin position="1"/>
        <end position="241"/>
    </location>
</feature>
<feature type="binding site" evidence="1">
    <location>
        <begin position="15"/>
        <end position="18"/>
    </location>
    <ligand>
        <name>ATP</name>
        <dbReference type="ChEBI" id="CHEBI:30616"/>
    </ligand>
</feature>
<feature type="binding site" evidence="1">
    <location>
        <position position="57"/>
    </location>
    <ligand>
        <name>UMP</name>
        <dbReference type="ChEBI" id="CHEBI:57865"/>
    </ligand>
</feature>
<feature type="binding site" evidence="1">
    <location>
        <position position="58"/>
    </location>
    <ligand>
        <name>ATP</name>
        <dbReference type="ChEBI" id="CHEBI:30616"/>
    </ligand>
</feature>
<feature type="binding site" evidence="1">
    <location>
        <position position="62"/>
    </location>
    <ligand>
        <name>ATP</name>
        <dbReference type="ChEBI" id="CHEBI:30616"/>
    </ligand>
</feature>
<feature type="binding site" evidence="1">
    <location>
        <position position="77"/>
    </location>
    <ligand>
        <name>UMP</name>
        <dbReference type="ChEBI" id="CHEBI:57865"/>
    </ligand>
</feature>
<feature type="binding site" evidence="1">
    <location>
        <begin position="139"/>
        <end position="146"/>
    </location>
    <ligand>
        <name>UMP</name>
        <dbReference type="ChEBI" id="CHEBI:57865"/>
    </ligand>
</feature>
<feature type="binding site" evidence="1">
    <location>
        <position position="166"/>
    </location>
    <ligand>
        <name>ATP</name>
        <dbReference type="ChEBI" id="CHEBI:30616"/>
    </ligand>
</feature>
<feature type="binding site" evidence="1">
    <location>
        <position position="167"/>
    </location>
    <ligand>
        <name>ATP</name>
        <dbReference type="ChEBI" id="CHEBI:30616"/>
    </ligand>
</feature>
<feature type="binding site" evidence="1">
    <location>
        <position position="172"/>
    </location>
    <ligand>
        <name>ATP</name>
        <dbReference type="ChEBI" id="CHEBI:30616"/>
    </ligand>
</feature>
<feature type="binding site" evidence="1">
    <location>
        <position position="175"/>
    </location>
    <ligand>
        <name>ATP</name>
        <dbReference type="ChEBI" id="CHEBI:30616"/>
    </ligand>
</feature>
<reference key="1">
    <citation type="journal article" date="2002" name="Nat. Genet.">
        <title>Genome sequence of the endocellular obligate symbiont of tsetse flies, Wigglesworthia glossinidia.</title>
        <authorList>
            <person name="Akman L."/>
            <person name="Yamashita A."/>
            <person name="Watanabe H."/>
            <person name="Oshima K."/>
            <person name="Shiba T."/>
            <person name="Hattori M."/>
            <person name="Aksoy S."/>
        </authorList>
    </citation>
    <scope>NUCLEOTIDE SEQUENCE [LARGE SCALE GENOMIC DNA]</scope>
</reference>
<accession>Q8D2G4</accession>